<name>RS8_BLOPB</name>
<proteinExistence type="inferred from homology"/>
<gene>
    <name evidence="1" type="primary">rpsH</name>
    <name type="ordered locus">BPEN_212</name>
</gene>
<reference key="1">
    <citation type="journal article" date="2005" name="Genome Res.">
        <title>Genome sequence of Blochmannia pennsylvanicus indicates parallel evolutionary trends among bacterial mutualists of insects.</title>
        <authorList>
            <person name="Degnan P.H."/>
            <person name="Lazarus A.B."/>
            <person name="Wernegreen J.J."/>
        </authorList>
    </citation>
    <scope>NUCLEOTIDE SEQUENCE [LARGE SCALE GENOMIC DNA]</scope>
    <source>
        <strain>BPEN</strain>
    </source>
</reference>
<evidence type="ECO:0000255" key="1">
    <source>
        <dbReference type="HAMAP-Rule" id="MF_01302"/>
    </source>
</evidence>
<evidence type="ECO:0000305" key="2"/>
<sequence length="131" mass="14830">MSMQDSIADMLTTIRNGQISKKEKVCTPSSAMKVAIVHVLVEEGFIQKYNIKDSIKPTLEVFLKYYQKRKPVIDIIKRISRPGLRIYKKRKELPQVMSGMGIIIISTSKGVITDNRARQLNVGGEIICYVS</sequence>
<organism>
    <name type="scientific">Blochmanniella pennsylvanica (strain BPEN)</name>
    <dbReference type="NCBI Taxonomy" id="291272"/>
    <lineage>
        <taxon>Bacteria</taxon>
        <taxon>Pseudomonadati</taxon>
        <taxon>Pseudomonadota</taxon>
        <taxon>Gammaproteobacteria</taxon>
        <taxon>Enterobacterales</taxon>
        <taxon>Enterobacteriaceae</taxon>
        <taxon>ant endosymbionts</taxon>
        <taxon>Candidatus Blochmanniella</taxon>
    </lineage>
</organism>
<keyword id="KW-1185">Reference proteome</keyword>
<keyword id="KW-0687">Ribonucleoprotein</keyword>
<keyword id="KW-0689">Ribosomal protein</keyword>
<keyword id="KW-0694">RNA-binding</keyword>
<keyword id="KW-0699">rRNA-binding</keyword>
<protein>
    <recommendedName>
        <fullName evidence="1">Small ribosomal subunit protein uS8</fullName>
    </recommendedName>
    <alternativeName>
        <fullName evidence="2">30S ribosomal protein S8</fullName>
    </alternativeName>
</protein>
<feature type="chain" id="PRO_0000225857" description="Small ribosomal subunit protein uS8">
    <location>
        <begin position="1"/>
        <end position="131"/>
    </location>
</feature>
<dbReference type="EMBL" id="CP000016">
    <property type="protein sequence ID" value="AAZ40846.1"/>
    <property type="molecule type" value="Genomic_DNA"/>
</dbReference>
<dbReference type="RefSeq" id="WP_011282753.1">
    <property type="nucleotide sequence ID" value="NC_007292.1"/>
</dbReference>
<dbReference type="SMR" id="Q493J4"/>
<dbReference type="STRING" id="291272.BPEN_212"/>
<dbReference type="KEGG" id="bpn:BPEN_212"/>
<dbReference type="eggNOG" id="COG0096">
    <property type="taxonomic scope" value="Bacteria"/>
</dbReference>
<dbReference type="HOGENOM" id="CLU_098428_0_0_6"/>
<dbReference type="OrthoDB" id="9802617at2"/>
<dbReference type="Proteomes" id="UP000007794">
    <property type="component" value="Chromosome"/>
</dbReference>
<dbReference type="GO" id="GO:1990904">
    <property type="term" value="C:ribonucleoprotein complex"/>
    <property type="evidence" value="ECO:0007669"/>
    <property type="project" value="UniProtKB-KW"/>
</dbReference>
<dbReference type="GO" id="GO:0005840">
    <property type="term" value="C:ribosome"/>
    <property type="evidence" value="ECO:0007669"/>
    <property type="project" value="UniProtKB-KW"/>
</dbReference>
<dbReference type="GO" id="GO:0019843">
    <property type="term" value="F:rRNA binding"/>
    <property type="evidence" value="ECO:0007669"/>
    <property type="project" value="UniProtKB-UniRule"/>
</dbReference>
<dbReference type="GO" id="GO:0003735">
    <property type="term" value="F:structural constituent of ribosome"/>
    <property type="evidence" value="ECO:0007669"/>
    <property type="project" value="InterPro"/>
</dbReference>
<dbReference type="GO" id="GO:0006412">
    <property type="term" value="P:translation"/>
    <property type="evidence" value="ECO:0007669"/>
    <property type="project" value="UniProtKB-UniRule"/>
</dbReference>
<dbReference type="FunFam" id="3.30.1370.30:FF:000002">
    <property type="entry name" value="30S ribosomal protein S8"/>
    <property type="match status" value="1"/>
</dbReference>
<dbReference type="FunFam" id="3.30.1490.10:FF:000001">
    <property type="entry name" value="30S ribosomal protein S8"/>
    <property type="match status" value="1"/>
</dbReference>
<dbReference type="Gene3D" id="3.30.1370.30">
    <property type="match status" value="1"/>
</dbReference>
<dbReference type="Gene3D" id="3.30.1490.10">
    <property type="match status" value="1"/>
</dbReference>
<dbReference type="HAMAP" id="MF_01302_B">
    <property type="entry name" value="Ribosomal_uS8_B"/>
    <property type="match status" value="1"/>
</dbReference>
<dbReference type="InterPro" id="IPR000630">
    <property type="entry name" value="Ribosomal_uS8"/>
</dbReference>
<dbReference type="InterPro" id="IPR047863">
    <property type="entry name" value="Ribosomal_uS8_CS"/>
</dbReference>
<dbReference type="InterPro" id="IPR035987">
    <property type="entry name" value="Ribosomal_uS8_sf"/>
</dbReference>
<dbReference type="NCBIfam" id="NF001109">
    <property type="entry name" value="PRK00136.1"/>
    <property type="match status" value="1"/>
</dbReference>
<dbReference type="PANTHER" id="PTHR11758">
    <property type="entry name" value="40S RIBOSOMAL PROTEIN S15A"/>
    <property type="match status" value="1"/>
</dbReference>
<dbReference type="Pfam" id="PF00410">
    <property type="entry name" value="Ribosomal_S8"/>
    <property type="match status" value="1"/>
</dbReference>
<dbReference type="SUPFAM" id="SSF56047">
    <property type="entry name" value="Ribosomal protein S8"/>
    <property type="match status" value="1"/>
</dbReference>
<dbReference type="PROSITE" id="PS00053">
    <property type="entry name" value="RIBOSOMAL_S8"/>
    <property type="match status" value="1"/>
</dbReference>
<accession>Q493J4</accession>
<comment type="function">
    <text evidence="1">One of the primary rRNA binding proteins, it binds directly to 16S rRNA central domain where it helps coordinate assembly of the platform of the 30S subunit.</text>
</comment>
<comment type="subunit">
    <text evidence="1">Part of the 30S ribosomal subunit. Contacts proteins S5 and S12.</text>
</comment>
<comment type="similarity">
    <text evidence="1">Belongs to the universal ribosomal protein uS8 family.</text>
</comment>